<feature type="chain" id="PRO_1000184154" description="Large ribosomal subunit protein uL30">
    <location>
        <begin position="1"/>
        <end position="59"/>
    </location>
</feature>
<reference key="1">
    <citation type="journal article" date="2009" name="J. Bacteriol.">
        <title>Complete and draft genome sequences of six members of the Aquificales.</title>
        <authorList>
            <person name="Reysenbach A.-L."/>
            <person name="Hamamura N."/>
            <person name="Podar M."/>
            <person name="Griffiths E."/>
            <person name="Ferreira S."/>
            <person name="Hochstein R."/>
            <person name="Heidelberg J."/>
            <person name="Johnson J."/>
            <person name="Mead D."/>
            <person name="Pohorille A."/>
            <person name="Sarmiento M."/>
            <person name="Schweighofer K."/>
            <person name="Seshadri R."/>
            <person name="Voytek M.A."/>
        </authorList>
    </citation>
    <scope>NUCLEOTIDE SEQUENCE [LARGE SCALE GENOMIC DNA]</scope>
    <source>
        <strain>DSM 14350 / EX-H1</strain>
    </source>
</reference>
<name>RL30_PERMH</name>
<sequence length="59" mass="6774">MRIKVKLVRGLAGKRKDQIKAVRSLGLKKVNDERILEKNPMVLGNINKVKHLIQVEEVE</sequence>
<proteinExistence type="inferred from homology"/>
<accession>C0QQP1</accession>
<gene>
    <name evidence="1" type="primary">rpmD</name>
    <name type="ordered locus">PERMA_1214</name>
</gene>
<keyword id="KW-1185">Reference proteome</keyword>
<keyword id="KW-0687">Ribonucleoprotein</keyword>
<keyword id="KW-0689">Ribosomal protein</keyword>
<dbReference type="EMBL" id="CP001230">
    <property type="protein sequence ID" value="ACO04852.1"/>
    <property type="molecule type" value="Genomic_DNA"/>
</dbReference>
<dbReference type="RefSeq" id="WP_015898956.1">
    <property type="nucleotide sequence ID" value="NC_012440.1"/>
</dbReference>
<dbReference type="SMR" id="C0QQP1"/>
<dbReference type="STRING" id="123214.PERMA_1214"/>
<dbReference type="PaxDb" id="123214-PERMA_1214"/>
<dbReference type="KEGG" id="pmx:PERMA_1214"/>
<dbReference type="eggNOG" id="COG1841">
    <property type="taxonomic scope" value="Bacteria"/>
</dbReference>
<dbReference type="HOGENOM" id="CLU_131047_2_1_0"/>
<dbReference type="Proteomes" id="UP000001366">
    <property type="component" value="Chromosome"/>
</dbReference>
<dbReference type="GO" id="GO:0022625">
    <property type="term" value="C:cytosolic large ribosomal subunit"/>
    <property type="evidence" value="ECO:0007669"/>
    <property type="project" value="TreeGrafter"/>
</dbReference>
<dbReference type="GO" id="GO:0003735">
    <property type="term" value="F:structural constituent of ribosome"/>
    <property type="evidence" value="ECO:0007669"/>
    <property type="project" value="InterPro"/>
</dbReference>
<dbReference type="GO" id="GO:0006412">
    <property type="term" value="P:translation"/>
    <property type="evidence" value="ECO:0007669"/>
    <property type="project" value="UniProtKB-UniRule"/>
</dbReference>
<dbReference type="CDD" id="cd01658">
    <property type="entry name" value="Ribosomal_L30"/>
    <property type="match status" value="1"/>
</dbReference>
<dbReference type="Gene3D" id="3.30.1390.20">
    <property type="entry name" value="Ribosomal protein L30, ferredoxin-like fold domain"/>
    <property type="match status" value="1"/>
</dbReference>
<dbReference type="HAMAP" id="MF_01371_B">
    <property type="entry name" value="Ribosomal_uL30_B"/>
    <property type="match status" value="1"/>
</dbReference>
<dbReference type="InterPro" id="IPR036919">
    <property type="entry name" value="Ribo_uL30_ferredoxin-like_sf"/>
</dbReference>
<dbReference type="InterPro" id="IPR005996">
    <property type="entry name" value="Ribosomal_uL30_bac-type"/>
</dbReference>
<dbReference type="InterPro" id="IPR016082">
    <property type="entry name" value="Ribosomal_uL30_ferredoxin-like"/>
</dbReference>
<dbReference type="NCBIfam" id="TIGR01308">
    <property type="entry name" value="rpmD_bact"/>
    <property type="match status" value="1"/>
</dbReference>
<dbReference type="PANTHER" id="PTHR15892:SF2">
    <property type="entry name" value="LARGE RIBOSOMAL SUBUNIT PROTEIN UL30M"/>
    <property type="match status" value="1"/>
</dbReference>
<dbReference type="PANTHER" id="PTHR15892">
    <property type="entry name" value="MITOCHONDRIAL RIBOSOMAL PROTEIN L30"/>
    <property type="match status" value="1"/>
</dbReference>
<dbReference type="Pfam" id="PF00327">
    <property type="entry name" value="Ribosomal_L30"/>
    <property type="match status" value="1"/>
</dbReference>
<dbReference type="PIRSF" id="PIRSF002211">
    <property type="entry name" value="Ribosomal_L30_bac-type"/>
    <property type="match status" value="1"/>
</dbReference>
<dbReference type="SUPFAM" id="SSF55129">
    <property type="entry name" value="Ribosomal protein L30p/L7e"/>
    <property type="match status" value="1"/>
</dbReference>
<evidence type="ECO:0000255" key="1">
    <source>
        <dbReference type="HAMAP-Rule" id="MF_01371"/>
    </source>
</evidence>
<evidence type="ECO:0000305" key="2"/>
<comment type="subunit">
    <text evidence="1">Part of the 50S ribosomal subunit.</text>
</comment>
<comment type="similarity">
    <text evidence="1">Belongs to the universal ribosomal protein uL30 family.</text>
</comment>
<protein>
    <recommendedName>
        <fullName evidence="1">Large ribosomal subunit protein uL30</fullName>
    </recommendedName>
    <alternativeName>
        <fullName evidence="2">50S ribosomal protein L30</fullName>
    </alternativeName>
</protein>
<organism>
    <name type="scientific">Persephonella marina (strain DSM 14350 / EX-H1)</name>
    <dbReference type="NCBI Taxonomy" id="123214"/>
    <lineage>
        <taxon>Bacteria</taxon>
        <taxon>Pseudomonadati</taxon>
        <taxon>Aquificota</taxon>
        <taxon>Aquificia</taxon>
        <taxon>Aquificales</taxon>
        <taxon>Hydrogenothermaceae</taxon>
        <taxon>Persephonella</taxon>
    </lineage>
</organism>